<accession>Q31LW2</accession>
<name>DAPF_SYNE7</name>
<sequence length="280" mass="29971">MSLQFAKYHGLGNDFILVDNRESGEPRLTPEQAVQVCDRNFGVGADGVIFALPGSGDSDYVMRIFNSDGSEPEMCGNGIRCLAKFLSELDGGAQSRYRIATGAGLIVPTLTETGLVTVDMGPAYLKPVEIPTTLTGTGDRVVEADLEVGDRPWKVTTVSMGNPHCITFVEDVAAVPLAEIGPLFEHHPVFPQRTNTEFVEVVRPDYLKMRVWERGAGATLACGTGACATLVAAVLTGRSDRQATVELPGGPLQIEWREDGHLFMTGPAVKVFSGSMELAA</sequence>
<comment type="function">
    <text evidence="1">Catalyzes the stereoinversion of LL-2,6-diaminopimelate (L,L-DAP) to meso-diaminopimelate (meso-DAP), a precursor of L-lysine and an essential component of the bacterial peptidoglycan.</text>
</comment>
<comment type="catalytic activity">
    <reaction evidence="1">
        <text>(2S,6S)-2,6-diaminopimelate = meso-2,6-diaminopimelate</text>
        <dbReference type="Rhea" id="RHEA:15393"/>
        <dbReference type="ChEBI" id="CHEBI:57609"/>
        <dbReference type="ChEBI" id="CHEBI:57791"/>
        <dbReference type="EC" id="5.1.1.7"/>
    </reaction>
</comment>
<comment type="pathway">
    <text evidence="1">Amino-acid biosynthesis; L-lysine biosynthesis via DAP pathway; DL-2,6-diaminopimelate from LL-2,6-diaminopimelate: step 1/1.</text>
</comment>
<comment type="subunit">
    <text evidence="1">Homodimer.</text>
</comment>
<comment type="subcellular location">
    <subcellularLocation>
        <location evidence="1">Cytoplasm</location>
    </subcellularLocation>
</comment>
<comment type="similarity">
    <text evidence="1">Belongs to the diaminopimelate epimerase family.</text>
</comment>
<organism>
    <name type="scientific">Synechococcus elongatus (strain ATCC 33912 / PCC 7942 / FACHB-805)</name>
    <name type="common">Anacystis nidulans R2</name>
    <dbReference type="NCBI Taxonomy" id="1140"/>
    <lineage>
        <taxon>Bacteria</taxon>
        <taxon>Bacillati</taxon>
        <taxon>Cyanobacteriota</taxon>
        <taxon>Cyanophyceae</taxon>
        <taxon>Synechococcales</taxon>
        <taxon>Synechococcaceae</taxon>
        <taxon>Synechococcus</taxon>
    </lineage>
</organism>
<dbReference type="EC" id="5.1.1.7" evidence="1"/>
<dbReference type="EMBL" id="CP000100">
    <property type="protein sequence ID" value="ABB57957.1"/>
    <property type="molecule type" value="Genomic_DNA"/>
</dbReference>
<dbReference type="RefSeq" id="WP_011244477.1">
    <property type="nucleotide sequence ID" value="NZ_JACJTX010000001.1"/>
</dbReference>
<dbReference type="SMR" id="Q31LW2"/>
<dbReference type="STRING" id="1140.Synpcc7942_1927"/>
<dbReference type="PaxDb" id="1140-Synpcc7942_1927"/>
<dbReference type="GeneID" id="72430800"/>
<dbReference type="KEGG" id="syf:Synpcc7942_1927"/>
<dbReference type="eggNOG" id="COG0253">
    <property type="taxonomic scope" value="Bacteria"/>
</dbReference>
<dbReference type="HOGENOM" id="CLU_053306_2_1_3"/>
<dbReference type="OrthoDB" id="9805408at2"/>
<dbReference type="BioCyc" id="SYNEL:SYNPCC7942_1927-MONOMER"/>
<dbReference type="UniPathway" id="UPA00034">
    <property type="reaction ID" value="UER00025"/>
</dbReference>
<dbReference type="Proteomes" id="UP000889800">
    <property type="component" value="Chromosome"/>
</dbReference>
<dbReference type="GO" id="GO:0005829">
    <property type="term" value="C:cytosol"/>
    <property type="evidence" value="ECO:0007669"/>
    <property type="project" value="TreeGrafter"/>
</dbReference>
<dbReference type="GO" id="GO:0008837">
    <property type="term" value="F:diaminopimelate epimerase activity"/>
    <property type="evidence" value="ECO:0007669"/>
    <property type="project" value="UniProtKB-UniRule"/>
</dbReference>
<dbReference type="GO" id="GO:0009089">
    <property type="term" value="P:lysine biosynthetic process via diaminopimelate"/>
    <property type="evidence" value="ECO:0007669"/>
    <property type="project" value="UniProtKB-UniRule"/>
</dbReference>
<dbReference type="FunFam" id="3.10.310.10:FF:000009">
    <property type="entry name" value="Diaminopimelate epimerase chloroplastic"/>
    <property type="match status" value="1"/>
</dbReference>
<dbReference type="FunFam" id="3.10.310.10:FF:000011">
    <property type="entry name" value="Diaminopimelate epimerase, chloroplastic"/>
    <property type="match status" value="1"/>
</dbReference>
<dbReference type="Gene3D" id="3.10.310.10">
    <property type="entry name" value="Diaminopimelate Epimerase, Chain A, domain 1"/>
    <property type="match status" value="2"/>
</dbReference>
<dbReference type="HAMAP" id="MF_00197">
    <property type="entry name" value="DAP_epimerase"/>
    <property type="match status" value="1"/>
</dbReference>
<dbReference type="InterPro" id="IPR018510">
    <property type="entry name" value="DAP_epimerase_AS"/>
</dbReference>
<dbReference type="InterPro" id="IPR001653">
    <property type="entry name" value="DAP_epimerase_DapF"/>
</dbReference>
<dbReference type="NCBIfam" id="TIGR00652">
    <property type="entry name" value="DapF"/>
    <property type="match status" value="1"/>
</dbReference>
<dbReference type="PANTHER" id="PTHR31689:SF0">
    <property type="entry name" value="DIAMINOPIMELATE EPIMERASE"/>
    <property type="match status" value="1"/>
</dbReference>
<dbReference type="PANTHER" id="PTHR31689">
    <property type="entry name" value="DIAMINOPIMELATE EPIMERASE, CHLOROPLASTIC"/>
    <property type="match status" value="1"/>
</dbReference>
<dbReference type="Pfam" id="PF01678">
    <property type="entry name" value="DAP_epimerase"/>
    <property type="match status" value="2"/>
</dbReference>
<dbReference type="SUPFAM" id="SSF54506">
    <property type="entry name" value="Diaminopimelate epimerase-like"/>
    <property type="match status" value="2"/>
</dbReference>
<dbReference type="PROSITE" id="PS01326">
    <property type="entry name" value="DAP_EPIMERASE"/>
    <property type="match status" value="1"/>
</dbReference>
<evidence type="ECO:0000255" key="1">
    <source>
        <dbReference type="HAMAP-Rule" id="MF_00197"/>
    </source>
</evidence>
<keyword id="KW-0028">Amino-acid biosynthesis</keyword>
<keyword id="KW-0963">Cytoplasm</keyword>
<keyword id="KW-0413">Isomerase</keyword>
<keyword id="KW-0457">Lysine biosynthesis</keyword>
<keyword id="KW-1185">Reference proteome</keyword>
<reference key="1">
    <citation type="submission" date="2005-08" db="EMBL/GenBank/DDBJ databases">
        <title>Complete sequence of chromosome 1 of Synechococcus elongatus PCC 7942.</title>
        <authorList>
            <consortium name="US DOE Joint Genome Institute"/>
            <person name="Copeland A."/>
            <person name="Lucas S."/>
            <person name="Lapidus A."/>
            <person name="Barry K."/>
            <person name="Detter J.C."/>
            <person name="Glavina T."/>
            <person name="Hammon N."/>
            <person name="Israni S."/>
            <person name="Pitluck S."/>
            <person name="Schmutz J."/>
            <person name="Larimer F."/>
            <person name="Land M."/>
            <person name="Kyrpides N."/>
            <person name="Lykidis A."/>
            <person name="Golden S."/>
            <person name="Richardson P."/>
        </authorList>
    </citation>
    <scope>NUCLEOTIDE SEQUENCE [LARGE SCALE GENOMIC DNA]</scope>
    <source>
        <strain>ATCC 33912 / PCC 7942 / FACHB-805</strain>
    </source>
</reference>
<gene>
    <name evidence="1" type="primary">dapF</name>
    <name type="ordered locus">Synpcc7942_1927</name>
</gene>
<proteinExistence type="inferred from homology"/>
<feature type="chain" id="PRO_1000011977" description="Diaminopimelate epimerase">
    <location>
        <begin position="1"/>
        <end position="280"/>
    </location>
</feature>
<feature type="active site" description="Proton donor" evidence="1">
    <location>
        <position position="75"/>
    </location>
</feature>
<feature type="active site" description="Proton acceptor" evidence="1">
    <location>
        <position position="222"/>
    </location>
</feature>
<feature type="binding site" evidence="1">
    <location>
        <position position="13"/>
    </location>
    <ligand>
        <name>substrate</name>
    </ligand>
</feature>
<feature type="binding site" evidence="1">
    <location>
        <position position="66"/>
    </location>
    <ligand>
        <name>substrate</name>
    </ligand>
</feature>
<feature type="binding site" evidence="1">
    <location>
        <begin position="76"/>
        <end position="77"/>
    </location>
    <ligand>
        <name>substrate</name>
    </ligand>
</feature>
<feature type="binding site" evidence="1">
    <location>
        <position position="162"/>
    </location>
    <ligand>
        <name>substrate</name>
    </ligand>
</feature>
<feature type="binding site" evidence="1">
    <location>
        <position position="195"/>
    </location>
    <ligand>
        <name>substrate</name>
    </ligand>
</feature>
<feature type="binding site" evidence="1">
    <location>
        <begin position="213"/>
        <end position="214"/>
    </location>
    <ligand>
        <name>substrate</name>
    </ligand>
</feature>
<feature type="binding site" evidence="1">
    <location>
        <begin position="223"/>
        <end position="224"/>
    </location>
    <ligand>
        <name>substrate</name>
    </ligand>
</feature>
<feature type="site" description="Could be important to modulate the pK values of the two catalytic cysteine residues" evidence="1">
    <location>
        <position position="164"/>
    </location>
</feature>
<feature type="site" description="Could be important to modulate the pK values of the two catalytic cysteine residues" evidence="1">
    <location>
        <position position="213"/>
    </location>
</feature>
<protein>
    <recommendedName>
        <fullName evidence="1">Diaminopimelate epimerase</fullName>
        <shortName evidence="1">DAP epimerase</shortName>
        <ecNumber evidence="1">5.1.1.7</ecNumber>
    </recommendedName>
    <alternativeName>
        <fullName evidence="1">PLP-independent amino acid racemase</fullName>
    </alternativeName>
</protein>